<protein>
    <recommendedName>
        <fullName evidence="2">Formamidopyrimidine-DNA glycosylase</fullName>
        <shortName evidence="2">Fapy-DNA glycosylase</shortName>
        <ecNumber evidence="2">3.2.2.23</ecNumber>
    </recommendedName>
    <alternativeName>
        <fullName evidence="2">DNA-(apurinic or apyrimidinic site) lyase MutM</fullName>
        <shortName evidence="2">AP lyase MutM</shortName>
        <ecNumber evidence="2">4.2.99.18</ecNumber>
    </alternativeName>
</protein>
<sequence length="274" mass="30443">MPELPEVETCLRGIEPYLAGQTIQQIVIRTPKLRWPISAELCAMSGAKILALSRRAKYLIIHTERGDILVHLGMSGSLTLLNSSQPTKASKHDHVDLITEAGIILRYNDPRKFGAWLWAKQAENYPLITKLGPEPLSDTFTSDYLFKKSRNKTVAVKNFIMNNDIVVGVGNIYASESLFMAGVHPELAAQNLTEKQCVQLRNVIQAVLTKAIIQGGTTLKDFTQPDGKPGYFAQVLQVYGRKGEECRECGTLIQAKVIGQRNSYFCPDCQPLPK</sequence>
<proteinExistence type="inferred from homology"/>
<keyword id="KW-0227">DNA damage</keyword>
<keyword id="KW-0234">DNA repair</keyword>
<keyword id="KW-0238">DNA-binding</keyword>
<keyword id="KW-0326">Glycosidase</keyword>
<keyword id="KW-0378">Hydrolase</keyword>
<keyword id="KW-0456">Lyase</keyword>
<keyword id="KW-0479">Metal-binding</keyword>
<keyword id="KW-0511">Multifunctional enzyme</keyword>
<keyword id="KW-1185">Reference proteome</keyword>
<keyword id="KW-0862">Zinc</keyword>
<keyword id="KW-0863">Zinc-finger</keyword>
<accession>Q7VN67</accession>
<reference key="1">
    <citation type="submission" date="2003-06" db="EMBL/GenBank/DDBJ databases">
        <title>The complete genome sequence of Haemophilus ducreyi.</title>
        <authorList>
            <person name="Munson R.S. Jr."/>
            <person name="Ray W.C."/>
            <person name="Mahairas G."/>
            <person name="Sabo P."/>
            <person name="Mungur R."/>
            <person name="Johnson L."/>
            <person name="Nguyen D."/>
            <person name="Wang J."/>
            <person name="Forst C."/>
            <person name="Hood L."/>
        </authorList>
    </citation>
    <scope>NUCLEOTIDE SEQUENCE [LARGE SCALE GENOMIC DNA]</scope>
    <source>
        <strain>35000HP / ATCC 700724</strain>
    </source>
</reference>
<comment type="function">
    <text evidence="2">Involved in base excision repair of DNA damaged by oxidation or by mutagenic agents. Acts as a DNA glycosylase that recognizes and removes damaged bases. Has a preference for oxidized purines, such as 7,8-dihydro-8-oxoguanine (8-oxoG). Has AP (apurinic/apyrimidinic) lyase activity and introduces nicks in the DNA strand. Cleaves the DNA backbone by beta-delta elimination to generate a single-strand break at the site of the removed base with both 3'- and 5'-phosphates.</text>
</comment>
<comment type="catalytic activity">
    <reaction evidence="2">
        <text>Hydrolysis of DNA containing ring-opened 7-methylguanine residues, releasing 2,6-diamino-4-hydroxy-5-(N-methyl)formamidopyrimidine.</text>
        <dbReference type="EC" id="3.2.2.23"/>
    </reaction>
</comment>
<comment type="catalytic activity">
    <reaction evidence="2">
        <text>2'-deoxyribonucleotide-(2'-deoxyribose 5'-phosphate)-2'-deoxyribonucleotide-DNA = a 3'-end 2'-deoxyribonucleotide-(2,3-dehydro-2,3-deoxyribose 5'-phosphate)-DNA + a 5'-end 5'-phospho-2'-deoxyribonucleoside-DNA + H(+)</text>
        <dbReference type="Rhea" id="RHEA:66592"/>
        <dbReference type="Rhea" id="RHEA-COMP:13180"/>
        <dbReference type="Rhea" id="RHEA-COMP:16897"/>
        <dbReference type="Rhea" id="RHEA-COMP:17067"/>
        <dbReference type="ChEBI" id="CHEBI:15378"/>
        <dbReference type="ChEBI" id="CHEBI:136412"/>
        <dbReference type="ChEBI" id="CHEBI:157695"/>
        <dbReference type="ChEBI" id="CHEBI:167181"/>
        <dbReference type="EC" id="4.2.99.18"/>
    </reaction>
</comment>
<comment type="cofactor">
    <cofactor evidence="2">
        <name>Zn(2+)</name>
        <dbReference type="ChEBI" id="CHEBI:29105"/>
    </cofactor>
    <text evidence="2">Binds 1 zinc ion per subunit.</text>
</comment>
<comment type="subunit">
    <text evidence="2">Monomer.</text>
</comment>
<comment type="similarity">
    <text evidence="2">Belongs to the FPG family.</text>
</comment>
<dbReference type="EC" id="3.2.2.23" evidence="2"/>
<dbReference type="EC" id="4.2.99.18" evidence="2"/>
<dbReference type="EMBL" id="AE017143">
    <property type="protein sequence ID" value="AAP95626.1"/>
    <property type="molecule type" value="Genomic_DNA"/>
</dbReference>
<dbReference type="RefSeq" id="WP_010944678.1">
    <property type="nucleotide sequence ID" value="NC_002940.2"/>
</dbReference>
<dbReference type="SMR" id="Q7VN67"/>
<dbReference type="STRING" id="233412.HD_0710"/>
<dbReference type="KEGG" id="hdu:HD_0710"/>
<dbReference type="eggNOG" id="COG0266">
    <property type="taxonomic scope" value="Bacteria"/>
</dbReference>
<dbReference type="HOGENOM" id="CLU_038423_1_1_6"/>
<dbReference type="OrthoDB" id="9800855at2"/>
<dbReference type="Proteomes" id="UP000001022">
    <property type="component" value="Chromosome"/>
</dbReference>
<dbReference type="GO" id="GO:0034039">
    <property type="term" value="F:8-oxo-7,8-dihydroguanine DNA N-glycosylase activity"/>
    <property type="evidence" value="ECO:0007669"/>
    <property type="project" value="TreeGrafter"/>
</dbReference>
<dbReference type="GO" id="GO:0140078">
    <property type="term" value="F:class I DNA-(apurinic or apyrimidinic site) endonuclease activity"/>
    <property type="evidence" value="ECO:0007669"/>
    <property type="project" value="UniProtKB-EC"/>
</dbReference>
<dbReference type="GO" id="GO:0003684">
    <property type="term" value="F:damaged DNA binding"/>
    <property type="evidence" value="ECO:0007669"/>
    <property type="project" value="InterPro"/>
</dbReference>
<dbReference type="GO" id="GO:0008270">
    <property type="term" value="F:zinc ion binding"/>
    <property type="evidence" value="ECO:0007669"/>
    <property type="project" value="UniProtKB-UniRule"/>
</dbReference>
<dbReference type="GO" id="GO:0006284">
    <property type="term" value="P:base-excision repair"/>
    <property type="evidence" value="ECO:0007669"/>
    <property type="project" value="InterPro"/>
</dbReference>
<dbReference type="CDD" id="cd08966">
    <property type="entry name" value="EcFpg-like_N"/>
    <property type="match status" value="1"/>
</dbReference>
<dbReference type="FunFam" id="1.10.8.50:FF:000003">
    <property type="entry name" value="Formamidopyrimidine-DNA glycosylase"/>
    <property type="match status" value="1"/>
</dbReference>
<dbReference type="FunFam" id="3.20.190.10:FF:000001">
    <property type="entry name" value="Formamidopyrimidine-DNA glycosylase"/>
    <property type="match status" value="1"/>
</dbReference>
<dbReference type="Gene3D" id="1.10.8.50">
    <property type="match status" value="1"/>
</dbReference>
<dbReference type="Gene3D" id="3.20.190.10">
    <property type="entry name" value="MutM-like, N-terminal"/>
    <property type="match status" value="1"/>
</dbReference>
<dbReference type="HAMAP" id="MF_00103">
    <property type="entry name" value="Fapy_DNA_glycosyl"/>
    <property type="match status" value="1"/>
</dbReference>
<dbReference type="InterPro" id="IPR015886">
    <property type="entry name" value="DNA_glyclase/AP_lyase_DNA-bd"/>
</dbReference>
<dbReference type="InterPro" id="IPR015887">
    <property type="entry name" value="DNA_glyclase_Znf_dom_DNA_BS"/>
</dbReference>
<dbReference type="InterPro" id="IPR020629">
    <property type="entry name" value="Formamido-pyr_DNA_Glyclase"/>
</dbReference>
<dbReference type="InterPro" id="IPR012319">
    <property type="entry name" value="FPG_cat"/>
</dbReference>
<dbReference type="InterPro" id="IPR035937">
    <property type="entry name" value="MutM-like_N-ter"/>
</dbReference>
<dbReference type="InterPro" id="IPR010979">
    <property type="entry name" value="Ribosomal_uS13-like_H2TH"/>
</dbReference>
<dbReference type="InterPro" id="IPR000214">
    <property type="entry name" value="Znf_DNA_glyclase/AP_lyase"/>
</dbReference>
<dbReference type="InterPro" id="IPR010663">
    <property type="entry name" value="Znf_FPG/IleRS"/>
</dbReference>
<dbReference type="NCBIfam" id="TIGR00577">
    <property type="entry name" value="fpg"/>
    <property type="match status" value="1"/>
</dbReference>
<dbReference type="NCBIfam" id="NF002211">
    <property type="entry name" value="PRK01103.1"/>
    <property type="match status" value="1"/>
</dbReference>
<dbReference type="PANTHER" id="PTHR22993">
    <property type="entry name" value="FORMAMIDOPYRIMIDINE-DNA GLYCOSYLASE"/>
    <property type="match status" value="1"/>
</dbReference>
<dbReference type="PANTHER" id="PTHR22993:SF9">
    <property type="entry name" value="FORMAMIDOPYRIMIDINE-DNA GLYCOSYLASE"/>
    <property type="match status" value="1"/>
</dbReference>
<dbReference type="Pfam" id="PF01149">
    <property type="entry name" value="Fapy_DNA_glyco"/>
    <property type="match status" value="1"/>
</dbReference>
<dbReference type="Pfam" id="PF06831">
    <property type="entry name" value="H2TH"/>
    <property type="match status" value="1"/>
</dbReference>
<dbReference type="Pfam" id="PF06827">
    <property type="entry name" value="zf-FPG_IleRS"/>
    <property type="match status" value="1"/>
</dbReference>
<dbReference type="SMART" id="SM00898">
    <property type="entry name" value="Fapy_DNA_glyco"/>
    <property type="match status" value="1"/>
</dbReference>
<dbReference type="SMART" id="SM01232">
    <property type="entry name" value="H2TH"/>
    <property type="match status" value="1"/>
</dbReference>
<dbReference type="SUPFAM" id="SSF57716">
    <property type="entry name" value="Glucocorticoid receptor-like (DNA-binding domain)"/>
    <property type="match status" value="1"/>
</dbReference>
<dbReference type="SUPFAM" id="SSF81624">
    <property type="entry name" value="N-terminal domain of MutM-like DNA repair proteins"/>
    <property type="match status" value="1"/>
</dbReference>
<dbReference type="SUPFAM" id="SSF46946">
    <property type="entry name" value="S13-like H2TH domain"/>
    <property type="match status" value="1"/>
</dbReference>
<dbReference type="PROSITE" id="PS51068">
    <property type="entry name" value="FPG_CAT"/>
    <property type="match status" value="1"/>
</dbReference>
<dbReference type="PROSITE" id="PS01242">
    <property type="entry name" value="ZF_FPG_1"/>
    <property type="match status" value="1"/>
</dbReference>
<dbReference type="PROSITE" id="PS51066">
    <property type="entry name" value="ZF_FPG_2"/>
    <property type="match status" value="1"/>
</dbReference>
<feature type="initiator methionine" description="Removed" evidence="1">
    <location>
        <position position="1"/>
    </location>
</feature>
<feature type="chain" id="PRO_0000170827" description="Formamidopyrimidine-DNA glycosylase">
    <location>
        <begin position="2"/>
        <end position="274"/>
    </location>
</feature>
<feature type="zinc finger region" description="FPG-type" evidence="2">
    <location>
        <begin position="237"/>
        <end position="271"/>
    </location>
</feature>
<feature type="active site" description="Schiff-base intermediate with DNA" evidence="2">
    <location>
        <position position="2"/>
    </location>
</feature>
<feature type="active site" description="Proton donor" evidence="2">
    <location>
        <position position="3"/>
    </location>
</feature>
<feature type="active site" description="Proton donor; for beta-elimination activity" evidence="2">
    <location>
        <position position="57"/>
    </location>
</feature>
<feature type="active site" description="Proton donor; for delta-elimination activity" evidence="2">
    <location>
        <position position="261"/>
    </location>
</feature>
<feature type="binding site" evidence="2">
    <location>
        <position position="92"/>
    </location>
    <ligand>
        <name>DNA</name>
        <dbReference type="ChEBI" id="CHEBI:16991"/>
    </ligand>
</feature>
<feature type="binding site" evidence="2">
    <location>
        <position position="111"/>
    </location>
    <ligand>
        <name>DNA</name>
        <dbReference type="ChEBI" id="CHEBI:16991"/>
    </ligand>
</feature>
<feature type="binding site" evidence="2">
    <location>
        <position position="152"/>
    </location>
    <ligand>
        <name>DNA</name>
        <dbReference type="ChEBI" id="CHEBI:16991"/>
    </ligand>
</feature>
<gene>
    <name evidence="2" type="primary">mutM</name>
    <name evidence="2" type="synonym">fpg</name>
    <name type="ordered locus">HD_0710</name>
</gene>
<name>FPG_HAEDU</name>
<evidence type="ECO:0000250" key="1"/>
<evidence type="ECO:0000255" key="2">
    <source>
        <dbReference type="HAMAP-Rule" id="MF_00103"/>
    </source>
</evidence>
<organism>
    <name type="scientific">Haemophilus ducreyi (strain 35000HP / ATCC 700724)</name>
    <dbReference type="NCBI Taxonomy" id="233412"/>
    <lineage>
        <taxon>Bacteria</taxon>
        <taxon>Pseudomonadati</taxon>
        <taxon>Pseudomonadota</taxon>
        <taxon>Gammaproteobacteria</taxon>
        <taxon>Pasteurellales</taxon>
        <taxon>Pasteurellaceae</taxon>
        <taxon>Haemophilus</taxon>
    </lineage>
</organism>